<name>Y143A_HAEIN</name>
<evidence type="ECO:0000255" key="1">
    <source>
        <dbReference type="HAMAP-Rule" id="MF_00507"/>
    </source>
</evidence>
<evidence type="ECO:0000305" key="2"/>
<proteinExistence type="inferred from homology"/>
<comment type="similarity">
    <text evidence="1">Belongs to the UPF0181 family.</text>
</comment>
<comment type="sequence caution" evidence="2">
    <conflict type="erroneous initiation">
        <sequence resource="EMBL-CDS" id="AAC23083"/>
    </conflict>
</comment>
<reference key="1">
    <citation type="journal article" date="1995" name="Science">
        <title>Whole-genome random sequencing and assembly of Haemophilus influenzae Rd.</title>
        <authorList>
            <person name="Fleischmann R.D."/>
            <person name="Adams M.D."/>
            <person name="White O."/>
            <person name="Clayton R.A."/>
            <person name="Kirkness E.F."/>
            <person name="Kerlavage A.R."/>
            <person name="Bult C.J."/>
            <person name="Tomb J.-F."/>
            <person name="Dougherty B.A."/>
            <person name="Merrick J.M."/>
            <person name="McKenney K."/>
            <person name="Sutton G.G."/>
            <person name="FitzHugh W."/>
            <person name="Fields C.A."/>
            <person name="Gocayne J.D."/>
            <person name="Scott J.D."/>
            <person name="Shirley R."/>
            <person name="Liu L.-I."/>
            <person name="Glodek A."/>
            <person name="Kelley J.M."/>
            <person name="Weidman J.F."/>
            <person name="Phillips C.A."/>
            <person name="Spriggs T."/>
            <person name="Hedblom E."/>
            <person name="Cotton M.D."/>
            <person name="Utterback T.R."/>
            <person name="Hanna M.C."/>
            <person name="Nguyen D.T."/>
            <person name="Saudek D.M."/>
            <person name="Brandon R.C."/>
            <person name="Fine L.D."/>
            <person name="Fritchman J.L."/>
            <person name="Fuhrmann J.L."/>
            <person name="Geoghagen N.S.M."/>
            <person name="Gnehm C.L."/>
            <person name="McDonald L.A."/>
            <person name="Small K.V."/>
            <person name="Fraser C.M."/>
            <person name="Smith H.O."/>
            <person name="Venter J.C."/>
        </authorList>
    </citation>
    <scope>NUCLEOTIDE SEQUENCE [LARGE SCALE GENOMIC DNA]</scope>
    <source>
        <strain>ATCC 51907 / DSM 11121 / KW20 / Rd</strain>
    </source>
</reference>
<reference key="2">
    <citation type="journal article" date="1998" name="Electrophoresis">
        <title>Low molecular weight proteins: a challenge for post-genomic research.</title>
        <authorList>
            <person name="Rudd K.E."/>
            <person name="Humphery-Smith I."/>
            <person name="Wasinger V.C."/>
            <person name="Bairoch A."/>
        </authorList>
    </citation>
    <scope>IDENTIFICATION</scope>
</reference>
<sequence length="52" mass="5903">MFDINLTHEQQQKAVEQIQELMAQGISSGEAIQIVAKALREIHKNDKKTPEN</sequence>
<dbReference type="EMBL" id="L42023">
    <property type="protein sequence ID" value="AAC23083.1"/>
    <property type="status" value="ALT_INIT"/>
    <property type="molecule type" value="Genomic_DNA"/>
</dbReference>
<dbReference type="RefSeq" id="NP_439585.2">
    <property type="nucleotide sequence ID" value="NC_000907.1"/>
</dbReference>
<dbReference type="SMR" id="P56507"/>
<dbReference type="STRING" id="71421.HI_1434.2"/>
<dbReference type="EnsemblBacteria" id="AAC23083">
    <property type="protein sequence ID" value="AAC23083"/>
    <property type="gene ID" value="HI_1434.2"/>
</dbReference>
<dbReference type="KEGG" id="hin:HI_1434.2"/>
<dbReference type="PATRIC" id="fig|71421.8.peg.1493"/>
<dbReference type="eggNOG" id="COG3140">
    <property type="taxonomic scope" value="Bacteria"/>
</dbReference>
<dbReference type="HOGENOM" id="CLU_185263_1_1_6"/>
<dbReference type="PhylomeDB" id="P56507"/>
<dbReference type="BioCyc" id="HINF71421:G1GJ1-1459-MONOMER"/>
<dbReference type="Proteomes" id="UP000000579">
    <property type="component" value="Chromosome"/>
</dbReference>
<dbReference type="HAMAP" id="MF_00507">
    <property type="entry name" value="UPF0181"/>
    <property type="match status" value="1"/>
</dbReference>
<dbReference type="InterPro" id="IPR005371">
    <property type="entry name" value="UPF0181"/>
</dbReference>
<dbReference type="NCBIfam" id="NF003476">
    <property type="entry name" value="PRK05114.1"/>
    <property type="match status" value="1"/>
</dbReference>
<dbReference type="Pfam" id="PF03701">
    <property type="entry name" value="UPF0181"/>
    <property type="match status" value="1"/>
</dbReference>
<feature type="chain" id="PRO_0000216196" description="UPF0181 protein HI_1434.2">
    <location>
        <begin position="1"/>
        <end position="52"/>
    </location>
</feature>
<accession>P56507</accession>
<accession>O86238</accession>
<organism>
    <name type="scientific">Haemophilus influenzae (strain ATCC 51907 / DSM 11121 / KW20 / Rd)</name>
    <dbReference type="NCBI Taxonomy" id="71421"/>
    <lineage>
        <taxon>Bacteria</taxon>
        <taxon>Pseudomonadati</taxon>
        <taxon>Pseudomonadota</taxon>
        <taxon>Gammaproteobacteria</taxon>
        <taxon>Pasteurellales</taxon>
        <taxon>Pasteurellaceae</taxon>
        <taxon>Haemophilus</taxon>
    </lineage>
</organism>
<keyword id="KW-1185">Reference proteome</keyword>
<protein>
    <recommendedName>
        <fullName evidence="1">UPF0181 protein HI_1434.2</fullName>
    </recommendedName>
</protein>
<gene>
    <name type="ordered locus">HI_1434.2</name>
</gene>